<organism>
    <name type="scientific">Dictyostelium discoideum</name>
    <name type="common">Social amoeba</name>
    <dbReference type="NCBI Taxonomy" id="44689"/>
    <lineage>
        <taxon>Eukaryota</taxon>
        <taxon>Amoebozoa</taxon>
        <taxon>Evosea</taxon>
        <taxon>Eumycetozoa</taxon>
        <taxon>Dictyostelia</taxon>
        <taxon>Dictyosteliales</taxon>
        <taxon>Dictyosteliaceae</taxon>
        <taxon>Dictyostelium</taxon>
    </lineage>
</organism>
<name>TOM1_DICDI</name>
<protein>
    <recommendedName>
        <fullName>Target of Myb protein 1</fullName>
    </recommendedName>
    <alternativeName>
        <fullName>DdTom1</fullName>
    </alternativeName>
</protein>
<proteinExistence type="evidence at protein level"/>
<comment type="function">
    <text evidence="1 5">May contribute to the sorting of ubiquitinated proteins and transfer them for further sorting/trafficking processes to the endosomal multivesicular bodies (MVBs) pathway. Binds to phospholipids, such as phosphatidylinositol PtdIns(3)P and PtdIns(3,5)P2. These phospholipids are involved in the recruitment of the ESCRT machinery to endosomal membranes (By similarity).</text>
</comment>
<comment type="subunit">
    <text evidence="5">Interacts (via GAT domain) with ubiquitin. Interacts with eps15 and chcA. Interacts with tsg101 (via UEV domain).</text>
</comment>
<comment type="subcellular location">
    <subcellularLocation>
        <location evidence="5">Cytoplasm</location>
    </subcellularLocation>
    <subcellularLocation>
        <location evidence="6">Membrane</location>
        <topology evidence="6">Peripheral membrane protein</topology>
    </subcellularLocation>
    <text>Localized to discrete punctae throughout the cytoplasm which are distinct from endocytic vacuoles expressing endosomal protein p80.</text>
</comment>
<comment type="domain">
    <text>The VHS domain binds phosphatidylinositol PtdIns(3)P and PtdIns(4)P.</text>
</comment>
<comment type="domain">
    <text>The GAT domain binds phosphatidylinositol PtdIns(3)P, PtdIns(4)P, PI(3,5)P2 and PtdIns(4,5)P2.</text>
</comment>
<comment type="domain">
    <text evidence="1">The Asn-Pro-Phe (NPF) motifs, which are found in proteins involved in the endocytic pathway, are known to interact with the EH domain.</text>
</comment>
<comment type="disruption phenotype">
    <text evidence="5">Cells show no change in the morphology of endocytic compartments.</text>
</comment>
<keyword id="KW-0963">Cytoplasm</keyword>
<keyword id="KW-0472">Membrane</keyword>
<keyword id="KW-0653">Protein transport</keyword>
<keyword id="KW-1185">Reference proteome</keyword>
<keyword id="KW-0677">Repeat</keyword>
<keyword id="KW-0813">Transport</keyword>
<dbReference type="EMBL" id="AAFI02000158">
    <property type="protein sequence ID" value="EAL62353.1"/>
    <property type="molecule type" value="Genomic_DNA"/>
</dbReference>
<dbReference type="RefSeq" id="XP_635855.1">
    <property type="nucleotide sequence ID" value="XM_630763.1"/>
</dbReference>
<dbReference type="SMR" id="Q54GH3"/>
<dbReference type="FunCoup" id="Q54GH3">
    <property type="interactions" value="432"/>
</dbReference>
<dbReference type="STRING" id="44689.Q54GH3"/>
<dbReference type="PaxDb" id="44689-DDB0232160"/>
<dbReference type="EnsemblProtists" id="EAL62353">
    <property type="protein sequence ID" value="EAL62353"/>
    <property type="gene ID" value="DDB_G0290163"/>
</dbReference>
<dbReference type="GeneID" id="8627511"/>
<dbReference type="KEGG" id="ddi:DDB_G0290163"/>
<dbReference type="dictyBase" id="DDB_G0290163">
    <property type="gene designation" value="tom1"/>
</dbReference>
<dbReference type="VEuPathDB" id="AmoebaDB:DDB_G0290163"/>
<dbReference type="eggNOG" id="KOG1087">
    <property type="taxonomic scope" value="Eukaryota"/>
</dbReference>
<dbReference type="HOGENOM" id="CLU_414164_0_0_1"/>
<dbReference type="InParanoid" id="Q54GH3"/>
<dbReference type="OMA" id="VHYQIAE"/>
<dbReference type="PRO" id="PR:Q54GH3"/>
<dbReference type="Proteomes" id="UP000002195">
    <property type="component" value="Chromosome 5"/>
</dbReference>
<dbReference type="GO" id="GO:0005737">
    <property type="term" value="C:cytoplasm"/>
    <property type="evidence" value="ECO:0000314"/>
    <property type="project" value="dictyBase"/>
</dbReference>
<dbReference type="GO" id="GO:0016020">
    <property type="term" value="C:membrane"/>
    <property type="evidence" value="ECO:0007669"/>
    <property type="project" value="UniProtKB-SubCell"/>
</dbReference>
<dbReference type="GO" id="GO:0035091">
    <property type="term" value="F:phosphatidylinositol binding"/>
    <property type="evidence" value="ECO:0000314"/>
    <property type="project" value="dictyBase"/>
</dbReference>
<dbReference type="GO" id="GO:0043130">
    <property type="term" value="F:ubiquitin binding"/>
    <property type="evidence" value="ECO:0000314"/>
    <property type="project" value="dictyBase"/>
</dbReference>
<dbReference type="GO" id="GO:0043328">
    <property type="term" value="P:protein transport to vacuole involved in ubiquitin-dependent protein catabolic process via the multivesicular body sorting pathway"/>
    <property type="evidence" value="ECO:0007669"/>
    <property type="project" value="InterPro"/>
</dbReference>
<dbReference type="CDD" id="cd21383">
    <property type="entry name" value="GAT_GGA_Tom1-like"/>
    <property type="match status" value="1"/>
</dbReference>
<dbReference type="CDD" id="cd03561">
    <property type="entry name" value="VHS"/>
    <property type="match status" value="1"/>
</dbReference>
<dbReference type="Gene3D" id="1.20.58.160">
    <property type="match status" value="1"/>
</dbReference>
<dbReference type="Gene3D" id="1.25.40.90">
    <property type="match status" value="1"/>
</dbReference>
<dbReference type="InterPro" id="IPR008942">
    <property type="entry name" value="ENTH_VHS"/>
</dbReference>
<dbReference type="InterPro" id="IPR004152">
    <property type="entry name" value="GAT_dom"/>
</dbReference>
<dbReference type="InterPro" id="IPR038425">
    <property type="entry name" value="GAT_sf"/>
</dbReference>
<dbReference type="InterPro" id="IPR044836">
    <property type="entry name" value="TOL_plant"/>
</dbReference>
<dbReference type="InterPro" id="IPR002014">
    <property type="entry name" value="VHS_dom"/>
</dbReference>
<dbReference type="PANTHER" id="PTHR45898:SF4">
    <property type="entry name" value="TARGET OF MYB PROTEIN 1"/>
    <property type="match status" value="1"/>
</dbReference>
<dbReference type="PANTHER" id="PTHR45898">
    <property type="entry name" value="TOM1-LIKE PROTEIN"/>
    <property type="match status" value="1"/>
</dbReference>
<dbReference type="Pfam" id="PF03127">
    <property type="entry name" value="GAT"/>
    <property type="match status" value="1"/>
</dbReference>
<dbReference type="Pfam" id="PF00790">
    <property type="entry name" value="VHS"/>
    <property type="match status" value="1"/>
</dbReference>
<dbReference type="SMART" id="SM00288">
    <property type="entry name" value="VHS"/>
    <property type="match status" value="1"/>
</dbReference>
<dbReference type="SUPFAM" id="SSF48464">
    <property type="entry name" value="ENTH/VHS domain"/>
    <property type="match status" value="1"/>
</dbReference>
<dbReference type="SUPFAM" id="SSF89009">
    <property type="entry name" value="GAT-like domain"/>
    <property type="match status" value="1"/>
</dbReference>
<dbReference type="PROSITE" id="PS50909">
    <property type="entry name" value="GAT"/>
    <property type="match status" value="1"/>
</dbReference>
<dbReference type="PROSITE" id="PS50179">
    <property type="entry name" value="VHS"/>
    <property type="match status" value="1"/>
</dbReference>
<sequence length="663" mass="75375">MVTELVDKATNELLIQTDWTTVLQISDILNRDPIHARGVVRQVTKKLKDRSRVILLALELADSLLQNCHCTHVYFAERTFQTELCRLIMNKKTKLNVKEKTLEIVESWGNAFQARHDVPGFYETYSFIKRSGYKFPPKPSDAPILNFNNSPAKRTVSTTILTNNSHSTTPPQANVPSFNNVSSVGSNNAGGGGSSSQPIKNQEISSIKGSTSVFNEMISFLNVEDEDPQENDLIKELFETCKQSQIRVKEMIESGSTNERDLNVLLKLNDEINNALNDHEACIKRRRAFVENGYKPVPPPQQQQQQQQQQQQQQQQQQQQQSHSNNHNGTTTTTTTNNNNKNPSYLTKHKELEEIDFFKAPDGISPYSVQQQLQPFQQQQFNSTYNPFAQPQPQQFQQQPQQQLQQQPQQQQGFNQRIQQPQQQADAFDLFVANRQQSNNNNNNNNINNTTSSFGANNPFANNSSNNNNTNGAIQPYIPNTAKSLPPVSQQLQQPMQNQFSPQPQKFVGSSITPSAPPPFKPNTTQSNPFNTSPPLNNMNNHNNNMMQQQQPQQQQQQQPQQQFNPMYNNNAMAPSYPNYNAIGADNQHNTNPYGMMNHQQQQQQQQQQQPMMNQMNNFSAPTYSQFTNYAQPNQQPYNNNYGGMNQSNMYPNNNMSGKSSLI</sequence>
<evidence type="ECO:0000250" key="1"/>
<evidence type="ECO:0000255" key="2">
    <source>
        <dbReference type="PROSITE-ProRule" id="PRU00218"/>
    </source>
</evidence>
<evidence type="ECO:0000255" key="3">
    <source>
        <dbReference type="PROSITE-ProRule" id="PRU00373"/>
    </source>
</evidence>
<evidence type="ECO:0000256" key="4">
    <source>
        <dbReference type="SAM" id="MobiDB-lite"/>
    </source>
</evidence>
<evidence type="ECO:0000269" key="5">
    <source>
    </source>
</evidence>
<evidence type="ECO:0000305" key="6">
    <source>
    </source>
</evidence>
<reference key="1">
    <citation type="journal article" date="2005" name="Nature">
        <title>The genome of the social amoeba Dictyostelium discoideum.</title>
        <authorList>
            <person name="Eichinger L."/>
            <person name="Pachebat J.A."/>
            <person name="Gloeckner G."/>
            <person name="Rajandream M.A."/>
            <person name="Sucgang R."/>
            <person name="Berriman M."/>
            <person name="Song J."/>
            <person name="Olsen R."/>
            <person name="Szafranski K."/>
            <person name="Xu Q."/>
            <person name="Tunggal B."/>
            <person name="Kummerfeld S."/>
            <person name="Madera M."/>
            <person name="Konfortov B.A."/>
            <person name="Rivero F."/>
            <person name="Bankier A.T."/>
            <person name="Lehmann R."/>
            <person name="Hamlin N."/>
            <person name="Davies R."/>
            <person name="Gaudet P."/>
            <person name="Fey P."/>
            <person name="Pilcher K."/>
            <person name="Chen G."/>
            <person name="Saunders D."/>
            <person name="Sodergren E.J."/>
            <person name="Davis P."/>
            <person name="Kerhornou A."/>
            <person name="Nie X."/>
            <person name="Hall N."/>
            <person name="Anjard C."/>
            <person name="Hemphill L."/>
            <person name="Bason N."/>
            <person name="Farbrother P."/>
            <person name="Desany B."/>
            <person name="Just E."/>
            <person name="Morio T."/>
            <person name="Rost R."/>
            <person name="Churcher C.M."/>
            <person name="Cooper J."/>
            <person name="Haydock S."/>
            <person name="van Driessche N."/>
            <person name="Cronin A."/>
            <person name="Goodhead I."/>
            <person name="Muzny D.M."/>
            <person name="Mourier T."/>
            <person name="Pain A."/>
            <person name="Lu M."/>
            <person name="Harper D."/>
            <person name="Lindsay R."/>
            <person name="Hauser H."/>
            <person name="James K.D."/>
            <person name="Quiles M."/>
            <person name="Madan Babu M."/>
            <person name="Saito T."/>
            <person name="Buchrieser C."/>
            <person name="Wardroper A."/>
            <person name="Felder M."/>
            <person name="Thangavelu M."/>
            <person name="Johnson D."/>
            <person name="Knights A."/>
            <person name="Loulseged H."/>
            <person name="Mungall K.L."/>
            <person name="Oliver K."/>
            <person name="Price C."/>
            <person name="Quail M.A."/>
            <person name="Urushihara H."/>
            <person name="Hernandez J."/>
            <person name="Rabbinowitsch E."/>
            <person name="Steffen D."/>
            <person name="Sanders M."/>
            <person name="Ma J."/>
            <person name="Kohara Y."/>
            <person name="Sharp S."/>
            <person name="Simmonds M.N."/>
            <person name="Spiegler S."/>
            <person name="Tivey A."/>
            <person name="Sugano S."/>
            <person name="White B."/>
            <person name="Walker D."/>
            <person name="Woodward J.R."/>
            <person name="Winckler T."/>
            <person name="Tanaka Y."/>
            <person name="Shaulsky G."/>
            <person name="Schleicher M."/>
            <person name="Weinstock G.M."/>
            <person name="Rosenthal A."/>
            <person name="Cox E.C."/>
            <person name="Chisholm R.L."/>
            <person name="Gibbs R.A."/>
            <person name="Loomis W.F."/>
            <person name="Platzer M."/>
            <person name="Kay R.R."/>
            <person name="Williams J.G."/>
            <person name="Dear P.H."/>
            <person name="Noegel A.A."/>
            <person name="Barrell B.G."/>
            <person name="Kuspa A."/>
        </authorList>
    </citation>
    <scope>NUCLEOTIDE SEQUENCE [LARGE SCALE GENOMIC DNA]</scope>
    <source>
        <strain>AX4</strain>
    </source>
</reference>
<reference key="2">
    <citation type="journal article" date="2009" name="Traffic">
        <title>Dictyostelium Tom1 participates in an ancestral ESCRT-0 complex.</title>
        <authorList>
            <person name="Blanc C."/>
            <person name="Charette S.J."/>
            <person name="Mattei S."/>
            <person name="Aubry L."/>
            <person name="Smith E.W."/>
            <person name="Cosson P."/>
            <person name="Letourneur F."/>
        </authorList>
    </citation>
    <scope>FUNCTION</scope>
    <scope>DISRUPTION PHENOTYPE</scope>
    <scope>INTERACTION WITH UBIQUITIN</scope>
    <scope>EPS15</scope>
    <scope>TSG101 AND CHCA</scope>
    <scope>SUBCELLULAR LOCATION</scope>
    <scope>MUTAGENESIS OF 514-PRO--PRO-517</scope>
</reference>
<gene>
    <name type="primary">tom1</name>
    <name type="ORF">DDB_G0290163</name>
</gene>
<feature type="chain" id="PRO_0000367434" description="Target of Myb protein 1">
    <location>
        <begin position="1"/>
        <end position="663"/>
    </location>
</feature>
<feature type="domain" description="VHS" evidence="2">
    <location>
        <begin position="9"/>
        <end position="136"/>
    </location>
</feature>
<feature type="domain" description="GAT" evidence="3">
    <location>
        <begin position="194"/>
        <end position="284"/>
    </location>
</feature>
<feature type="repeat" description="1">
    <location>
        <begin position="386"/>
        <end position="388"/>
    </location>
</feature>
<feature type="repeat" description="2">
    <location>
        <begin position="458"/>
        <end position="460"/>
    </location>
</feature>
<feature type="repeat" description="3">
    <location>
        <begin position="528"/>
        <end position="530"/>
    </location>
</feature>
<feature type="region of interest" description="Disordered" evidence="4">
    <location>
        <begin position="162"/>
        <end position="200"/>
    </location>
</feature>
<feature type="region of interest" description="Disordered" evidence="4">
    <location>
        <begin position="292"/>
        <end position="344"/>
    </location>
</feature>
<feature type="region of interest" description="Interaction with chcA">
    <location>
        <begin position="351"/>
        <end position="356"/>
    </location>
</feature>
<feature type="region of interest" description="Interaction with tsg101">
    <location>
        <begin position="357"/>
        <end position="663"/>
    </location>
</feature>
<feature type="region of interest" description="Disordered" evidence="4">
    <location>
        <begin position="384"/>
        <end position="422"/>
    </location>
</feature>
<feature type="region of interest" description="Disordered" evidence="4">
    <location>
        <begin position="436"/>
        <end position="474"/>
    </location>
</feature>
<feature type="region of interest" description="Disordered" evidence="4">
    <location>
        <begin position="495"/>
        <end position="575"/>
    </location>
</feature>
<feature type="region of interest" description="Disordered" evidence="4">
    <location>
        <begin position="644"/>
        <end position="663"/>
    </location>
</feature>
<feature type="short sequence motif" description="NPF 1">
    <location>
        <begin position="386"/>
        <end position="388"/>
    </location>
</feature>
<feature type="short sequence motif" description="NPF 2">
    <location>
        <begin position="458"/>
        <end position="460"/>
    </location>
</feature>
<feature type="short sequence motif" description="NPF 3">
    <location>
        <begin position="528"/>
        <end position="530"/>
    </location>
</feature>
<feature type="compositionally biased region" description="Polar residues" evidence="4">
    <location>
        <begin position="162"/>
        <end position="172"/>
    </location>
</feature>
<feature type="compositionally biased region" description="Low complexity" evidence="4">
    <location>
        <begin position="174"/>
        <end position="187"/>
    </location>
</feature>
<feature type="compositionally biased region" description="Low complexity" evidence="4">
    <location>
        <begin position="302"/>
        <end position="340"/>
    </location>
</feature>
<feature type="compositionally biased region" description="Low complexity" evidence="4">
    <location>
        <begin position="439"/>
        <end position="472"/>
    </location>
</feature>
<feature type="compositionally biased region" description="Low complexity" evidence="4">
    <location>
        <begin position="495"/>
        <end position="505"/>
    </location>
</feature>
<feature type="compositionally biased region" description="Polar residues" evidence="4">
    <location>
        <begin position="522"/>
        <end position="536"/>
    </location>
</feature>
<feature type="compositionally biased region" description="Low complexity" evidence="4">
    <location>
        <begin position="537"/>
        <end position="571"/>
    </location>
</feature>
<feature type="compositionally biased region" description="Polar residues" evidence="4">
    <location>
        <begin position="648"/>
        <end position="663"/>
    </location>
</feature>
<feature type="mutagenesis site" description="Abolishes interaction with tsg101." evidence="5">
    <original>PSAP</original>
    <variation>AAAA</variation>
    <location>
        <begin position="514"/>
        <end position="517"/>
    </location>
</feature>
<accession>Q54GH3</accession>